<sequence>MHKLLKLAAMGTAACALLAGMAPVANAQEKQNVEVLHWWTSGGEASALEVLKKDLESKGISWTDMPVAGGGGTEAMTVLRARVTAGNAPTAVQMLGFDIRDWAKQGALGNLDTVASKEGWEKVIPAPLQEFAKYDGHWIAAPVNIHSTNWMWINKAALDKAGGKEPTNWDELIALLDNFKAQGITPIAHGGQPWQDATIFDAVVLSFGPDFYKKAFIDLDPEALGSDTMKQAFDRMSKLRTYVDDNFSGRDWNLASAMVIEGKAGVQFMGDWAKGEFLKAGKKPGEDFVCMRYPGTQGAVTFNSDMFAMFKVSEDKVPAQLEMASAIESPAFQSAFNVVKGSAPARTDVPDTAFDACGKKAIADVKEANSKGTLLGSMAHGYANPAAVKNAIYDVVTRQFNGQLSSEDAVKELVAAVEAAK</sequence>
<accession>Q8FVX5</accession>
<accession>G0KD66</accession>
<protein>
    <recommendedName>
        <fullName>Probable sugar-binding periplasmic protein</fullName>
    </recommendedName>
</protein>
<comment type="function">
    <text evidence="2">Part of a binding-protein-dependent transport system for a sugar.</text>
</comment>
<comment type="subcellular location">
    <subcellularLocation>
        <location evidence="2">Periplasm</location>
    </subcellularLocation>
</comment>
<comment type="similarity">
    <text evidence="2">Belongs to the bacterial solute-binding protein 1 family.</text>
</comment>
<feature type="signal peptide" evidence="1">
    <location>
        <begin position="1"/>
        <end position="27"/>
    </location>
</feature>
<feature type="chain" id="PRO_0000031710" description="Probable sugar-binding periplasmic protein">
    <location>
        <begin position="28"/>
        <end position="421"/>
    </location>
</feature>
<dbReference type="EMBL" id="AE014292">
    <property type="protein sequence ID" value="AAN33879.1"/>
    <property type="molecule type" value="Genomic_DNA"/>
</dbReference>
<dbReference type="EMBL" id="CP002998">
    <property type="protein sequence ID" value="AEM20154.1"/>
    <property type="molecule type" value="Genomic_DNA"/>
</dbReference>
<dbReference type="RefSeq" id="WP_004690251.1">
    <property type="nucleotide sequence ID" value="NZ_KN046805.1"/>
</dbReference>
<dbReference type="SMR" id="Q8FVX5"/>
<dbReference type="KEGG" id="bms:BRA0693"/>
<dbReference type="KEGG" id="bsi:BS1330_II0686"/>
<dbReference type="PATRIC" id="fig|204722.21.peg.3637"/>
<dbReference type="HOGENOM" id="CLU_031285_15_0_5"/>
<dbReference type="PhylomeDB" id="Q8FVX5"/>
<dbReference type="Proteomes" id="UP000007104">
    <property type="component" value="Chromosome II"/>
</dbReference>
<dbReference type="GO" id="GO:0042597">
    <property type="term" value="C:periplasmic space"/>
    <property type="evidence" value="ECO:0007669"/>
    <property type="project" value="UniProtKB-SubCell"/>
</dbReference>
<dbReference type="Gene3D" id="3.40.190.10">
    <property type="entry name" value="Periplasmic binding protein-like II"/>
    <property type="match status" value="2"/>
</dbReference>
<dbReference type="InterPro" id="IPR050490">
    <property type="entry name" value="Bact_solute-bd_prot1"/>
</dbReference>
<dbReference type="InterPro" id="IPR006059">
    <property type="entry name" value="SBP"/>
</dbReference>
<dbReference type="PANTHER" id="PTHR43649">
    <property type="entry name" value="ARABINOSE-BINDING PROTEIN-RELATED"/>
    <property type="match status" value="1"/>
</dbReference>
<dbReference type="PANTHER" id="PTHR43649:SF28">
    <property type="entry name" value="BINDING PROTEIN COMPONENT OF ABC SUGAR TRANSPORTER-RELATED"/>
    <property type="match status" value="1"/>
</dbReference>
<dbReference type="Pfam" id="PF01547">
    <property type="entry name" value="SBP_bac_1"/>
    <property type="match status" value="1"/>
</dbReference>
<dbReference type="SUPFAM" id="SSF53850">
    <property type="entry name" value="Periplasmic binding protein-like II"/>
    <property type="match status" value="1"/>
</dbReference>
<name>SP39_BRUSU</name>
<gene>
    <name type="ordered locus">BRA0693</name>
    <name type="ordered locus">BS1330_II0686</name>
</gene>
<evidence type="ECO:0000255" key="1"/>
<evidence type="ECO:0000305" key="2"/>
<proteinExistence type="inferred from homology"/>
<reference key="1">
    <citation type="journal article" date="2002" name="Proc. Natl. Acad. Sci. U.S.A.">
        <title>The Brucella suis genome reveals fundamental similarities between animal and plant pathogens and symbionts.</title>
        <authorList>
            <person name="Paulsen I.T."/>
            <person name="Seshadri R."/>
            <person name="Nelson K.E."/>
            <person name="Eisen J.A."/>
            <person name="Heidelberg J.F."/>
            <person name="Read T.D."/>
            <person name="Dodson R.J."/>
            <person name="Umayam L.A."/>
            <person name="Brinkac L.M."/>
            <person name="Beanan M.J."/>
            <person name="Daugherty S.C."/>
            <person name="DeBoy R.T."/>
            <person name="Durkin A.S."/>
            <person name="Kolonay J.F."/>
            <person name="Madupu R."/>
            <person name="Nelson W.C."/>
            <person name="Ayodeji B."/>
            <person name="Kraul M."/>
            <person name="Shetty J."/>
            <person name="Malek J.A."/>
            <person name="Van Aken S.E."/>
            <person name="Riedmuller S."/>
            <person name="Tettelin H."/>
            <person name="Gill S.R."/>
            <person name="White O."/>
            <person name="Salzberg S.L."/>
            <person name="Hoover D.L."/>
            <person name="Lindler L.E."/>
            <person name="Halling S.M."/>
            <person name="Boyle S.M."/>
            <person name="Fraser C.M."/>
        </authorList>
    </citation>
    <scope>NUCLEOTIDE SEQUENCE [LARGE SCALE GENOMIC DNA]</scope>
    <source>
        <strain>1330</strain>
    </source>
</reference>
<reference key="2">
    <citation type="journal article" date="2011" name="J. Bacteriol.">
        <title>Revised genome sequence of Brucella suis 1330.</title>
        <authorList>
            <person name="Tae H."/>
            <person name="Shallom S."/>
            <person name="Settlage R."/>
            <person name="Preston D."/>
            <person name="Adams L.G."/>
            <person name="Garner H.R."/>
        </authorList>
    </citation>
    <scope>NUCLEOTIDE SEQUENCE [LARGE SCALE GENOMIC DNA]</scope>
    <source>
        <strain>1330</strain>
    </source>
</reference>
<organism>
    <name type="scientific">Brucella suis biovar 1 (strain 1330)</name>
    <dbReference type="NCBI Taxonomy" id="204722"/>
    <lineage>
        <taxon>Bacteria</taxon>
        <taxon>Pseudomonadati</taxon>
        <taxon>Pseudomonadota</taxon>
        <taxon>Alphaproteobacteria</taxon>
        <taxon>Hyphomicrobiales</taxon>
        <taxon>Brucellaceae</taxon>
        <taxon>Brucella/Ochrobactrum group</taxon>
        <taxon>Brucella</taxon>
    </lineage>
</organism>
<keyword id="KW-0574">Periplasm</keyword>
<keyword id="KW-0732">Signal</keyword>
<keyword id="KW-0762">Sugar transport</keyword>
<keyword id="KW-0813">Transport</keyword>